<organism>
    <name type="scientific">Vibrio atlanticus (strain LGP32)</name>
    <name type="common">Vibrio splendidus (strain Mel32)</name>
    <dbReference type="NCBI Taxonomy" id="575788"/>
    <lineage>
        <taxon>Bacteria</taxon>
        <taxon>Pseudomonadati</taxon>
        <taxon>Pseudomonadota</taxon>
        <taxon>Gammaproteobacteria</taxon>
        <taxon>Vibrionales</taxon>
        <taxon>Vibrionaceae</taxon>
        <taxon>Vibrio</taxon>
    </lineage>
</organism>
<evidence type="ECO:0000255" key="1">
    <source>
        <dbReference type="HAMAP-Rule" id="MF_00313"/>
    </source>
</evidence>
<gene>
    <name evidence="1" type="primary">glsA</name>
    <name type="ordered locus">VS_2690</name>
</gene>
<protein>
    <recommendedName>
        <fullName evidence="1">Glutaminase</fullName>
        <ecNumber evidence="1">3.5.1.2</ecNumber>
    </recommendedName>
</protein>
<reference key="1">
    <citation type="submission" date="2009-02" db="EMBL/GenBank/DDBJ databases">
        <title>Vibrio splendidus str. LGP32 complete genome.</title>
        <authorList>
            <person name="Mazel D."/>
            <person name="Le Roux F."/>
        </authorList>
    </citation>
    <scope>NUCLEOTIDE SEQUENCE [LARGE SCALE GENOMIC DNA]</scope>
    <source>
        <strain>LGP32</strain>
    </source>
</reference>
<proteinExistence type="inferred from homology"/>
<accession>B7VKR3</accession>
<feature type="chain" id="PRO_1000132912" description="Glutaminase">
    <location>
        <begin position="1"/>
        <end position="306"/>
    </location>
</feature>
<feature type="binding site" evidence="1">
    <location>
        <position position="64"/>
    </location>
    <ligand>
        <name>substrate</name>
    </ligand>
</feature>
<feature type="binding site" evidence="1">
    <location>
        <position position="115"/>
    </location>
    <ligand>
        <name>substrate</name>
    </ligand>
</feature>
<feature type="binding site" evidence="1">
    <location>
        <position position="159"/>
    </location>
    <ligand>
        <name>substrate</name>
    </ligand>
</feature>
<feature type="binding site" evidence="1">
    <location>
        <position position="166"/>
    </location>
    <ligand>
        <name>substrate</name>
    </ligand>
</feature>
<feature type="binding site" evidence="1">
    <location>
        <position position="190"/>
    </location>
    <ligand>
        <name>substrate</name>
    </ligand>
</feature>
<feature type="binding site" evidence="1">
    <location>
        <position position="242"/>
    </location>
    <ligand>
        <name>substrate</name>
    </ligand>
</feature>
<feature type="binding site" evidence="1">
    <location>
        <position position="260"/>
    </location>
    <ligand>
        <name>substrate</name>
    </ligand>
</feature>
<sequence>MKPTQAILAEILDEVRPLIGQGKVADYIPALARVSNQKLAIAVYTNEGEVIQAGDADEAFSVQSISKALSLTLAMVLYKPEEIWQRVGKEPSGQAFNSMIQLEMEHGIPRNPFINAGAIVVADLLQSRLSAPRHRLLEFVRQLSGDTHIVYDKVVAASEMMHSDRNAAIAYLMRSFGNFENDVIPVLNNYFHACALKMTCVDLAKTFSYLANKGVSVQTKKEIITPVQTKQLNALLATCGLYDGAGEFAYRVGMPGKSGVGGGIIAIVPGEMTIAVWSPELDASGNSLAGTQALELLSERIGRSIF</sequence>
<keyword id="KW-0378">Hydrolase</keyword>
<dbReference type="EC" id="3.5.1.2" evidence="1"/>
<dbReference type="EMBL" id="FM954972">
    <property type="protein sequence ID" value="CAV19955.1"/>
    <property type="molecule type" value="Genomic_DNA"/>
</dbReference>
<dbReference type="SMR" id="B7VKR3"/>
<dbReference type="STRING" id="575788.VS_2690"/>
<dbReference type="KEGG" id="vsp:VS_2690"/>
<dbReference type="eggNOG" id="COG2066">
    <property type="taxonomic scope" value="Bacteria"/>
</dbReference>
<dbReference type="HOGENOM" id="CLU_027932_1_1_6"/>
<dbReference type="Proteomes" id="UP000009100">
    <property type="component" value="Chromosome 1"/>
</dbReference>
<dbReference type="GO" id="GO:0004359">
    <property type="term" value="F:glutaminase activity"/>
    <property type="evidence" value="ECO:0007669"/>
    <property type="project" value="UniProtKB-UniRule"/>
</dbReference>
<dbReference type="GO" id="GO:0006537">
    <property type="term" value="P:glutamate biosynthetic process"/>
    <property type="evidence" value="ECO:0007669"/>
    <property type="project" value="TreeGrafter"/>
</dbReference>
<dbReference type="GO" id="GO:0006543">
    <property type="term" value="P:glutamine catabolic process"/>
    <property type="evidence" value="ECO:0007669"/>
    <property type="project" value="TreeGrafter"/>
</dbReference>
<dbReference type="FunFam" id="3.40.710.10:FF:000005">
    <property type="entry name" value="Glutaminase"/>
    <property type="match status" value="1"/>
</dbReference>
<dbReference type="Gene3D" id="3.40.710.10">
    <property type="entry name" value="DD-peptidase/beta-lactamase superfamily"/>
    <property type="match status" value="1"/>
</dbReference>
<dbReference type="HAMAP" id="MF_00313">
    <property type="entry name" value="Glutaminase"/>
    <property type="match status" value="1"/>
</dbReference>
<dbReference type="InterPro" id="IPR012338">
    <property type="entry name" value="Beta-lactam/transpept-like"/>
</dbReference>
<dbReference type="InterPro" id="IPR015868">
    <property type="entry name" value="Glutaminase"/>
</dbReference>
<dbReference type="NCBIfam" id="TIGR03814">
    <property type="entry name" value="Gln_ase"/>
    <property type="match status" value="1"/>
</dbReference>
<dbReference type="NCBIfam" id="NF002132">
    <property type="entry name" value="PRK00971.1-1"/>
    <property type="match status" value="1"/>
</dbReference>
<dbReference type="NCBIfam" id="NF002133">
    <property type="entry name" value="PRK00971.1-2"/>
    <property type="match status" value="1"/>
</dbReference>
<dbReference type="PANTHER" id="PTHR12544">
    <property type="entry name" value="GLUTAMINASE"/>
    <property type="match status" value="1"/>
</dbReference>
<dbReference type="PANTHER" id="PTHR12544:SF29">
    <property type="entry name" value="GLUTAMINASE"/>
    <property type="match status" value="1"/>
</dbReference>
<dbReference type="Pfam" id="PF04960">
    <property type="entry name" value="Glutaminase"/>
    <property type="match status" value="1"/>
</dbReference>
<dbReference type="SUPFAM" id="SSF56601">
    <property type="entry name" value="beta-lactamase/transpeptidase-like"/>
    <property type="match status" value="1"/>
</dbReference>
<comment type="catalytic activity">
    <reaction evidence="1">
        <text>L-glutamine + H2O = L-glutamate + NH4(+)</text>
        <dbReference type="Rhea" id="RHEA:15889"/>
        <dbReference type="ChEBI" id="CHEBI:15377"/>
        <dbReference type="ChEBI" id="CHEBI:28938"/>
        <dbReference type="ChEBI" id="CHEBI:29985"/>
        <dbReference type="ChEBI" id="CHEBI:58359"/>
        <dbReference type="EC" id="3.5.1.2"/>
    </reaction>
</comment>
<comment type="subunit">
    <text evidence="1">Homotetramer.</text>
</comment>
<comment type="similarity">
    <text evidence="1">Belongs to the glutaminase family.</text>
</comment>
<name>GLSA_VIBA3</name>